<evidence type="ECO:0000250" key="1">
    <source>
        <dbReference type="UniProtKB" id="P46022"/>
    </source>
</evidence>
<gene>
    <name evidence="1" type="primary">mtgA</name>
    <name type="synonym">mtg</name>
</gene>
<accession>P69345</accession>
<accession>O52423</accession>
<accession>O52424</accession>
<accession>O52425</accession>
<accession>O52426</accession>
<accession>O52427</accession>
<accession>O52428</accession>
<accession>O52429</accession>
<accession>O52430</accession>
<accession>O52431</accession>
<accession>O52432</accession>
<accession>O54548</accession>
<accession>O54634</accession>
<accession>O54659</accession>
<organism>
    <name type="scientific">Neisseria meningitidis</name>
    <dbReference type="NCBI Taxonomy" id="487"/>
    <lineage>
        <taxon>Bacteria</taxon>
        <taxon>Pseudomonadati</taxon>
        <taxon>Pseudomonadota</taxon>
        <taxon>Betaproteobacteria</taxon>
        <taxon>Neisseriales</taxon>
        <taxon>Neisseriaceae</taxon>
        <taxon>Neisseria</taxon>
    </lineage>
</organism>
<keyword id="KW-0997">Cell inner membrane</keyword>
<keyword id="KW-1003">Cell membrane</keyword>
<keyword id="KW-0133">Cell shape</keyword>
<keyword id="KW-0961">Cell wall biogenesis/degradation</keyword>
<keyword id="KW-0328">Glycosyltransferase</keyword>
<keyword id="KW-0472">Membrane</keyword>
<keyword id="KW-0573">Peptidoglycan synthesis</keyword>
<keyword id="KW-0808">Transferase</keyword>
<keyword id="KW-0812">Transmembrane</keyword>
<keyword id="KW-1133">Transmembrane helix</keyword>
<protein>
    <recommendedName>
        <fullName evidence="1">Biosynthetic peptidoglycan transglycosylase</fullName>
        <ecNumber evidence="1">2.4.99.28</ecNumber>
    </recommendedName>
    <alternativeName>
        <fullName evidence="1">Glycan polymerase</fullName>
    </alternativeName>
    <alternativeName>
        <fullName evidence="1">Peptidoglycan glycosyltransferase MtgA</fullName>
        <shortName evidence="1">PGT</shortName>
    </alternativeName>
</protein>
<name>MTGA_NEIME</name>
<sequence>LDYRWMPYKRISTNLKKALIASEDARFAGHGGFDWGGIQNAIRRNRNSGKVKAGGSTISQQLAKNLFLNESRSYIRKGEEAAITAMMEAVTDKDRIFELYLNSIEWHYGVFGAEAASRYFYQIPAAKLTKQQAAKLTARVPAPLYYADHPKSKRLRNKTNIVLRR</sequence>
<feature type="chain" id="PRO_0000083133" description="Biosynthetic peptidoglycan transglycosylase">
    <location>
        <begin position="1" status="less than"/>
        <end position="165" status="greater than"/>
    </location>
</feature>
<feature type="sequence variant" description="In allele 2, allele 4, allele 7, allele 8, allele 12 and allele 15.">
    <original>M</original>
    <variation>V</variation>
    <location>
        <position position="6"/>
    </location>
</feature>
<feature type="sequence variant" description="In allele 15.">
    <original>K</original>
    <variation>D</variation>
    <location>
        <position position="9"/>
    </location>
</feature>
<feature type="sequence variant" description="In allele 1, allele 2, allele 4, allele 7, allele 8, allele 9, allele 10, allele 11, allele 12 and allele 16.">
    <original>K</original>
    <variation>N</variation>
    <location>
        <position position="9"/>
    </location>
</feature>
<feature type="sequence variant" description="In allele 1, allele 2, allele 4, allele 7, allele 8, allele 9, allele 10, allele 11, allele 12 and allele 16.">
    <original>T</original>
    <variation>V</variation>
    <location>
        <position position="13"/>
    </location>
</feature>
<feature type="sequence variant" description="In allele 4, allele 8, allele 12 and allele 15.">
    <original>R</original>
    <variation>H</variation>
    <location>
        <position position="26"/>
    </location>
</feature>
<feature type="sequence variant" description="In allele 10 and allele 15.">
    <original>K</original>
    <variation>E</variation>
    <location>
        <position position="50"/>
    </location>
</feature>
<feature type="sequence variant" description="In allele 15.">
    <original>A</original>
    <variation>T</variation>
    <location>
        <position position="53"/>
    </location>
</feature>
<feature type="sequence variant" description="In allele 15.">
    <original>I</original>
    <variation>L</variation>
    <location>
        <position position="75"/>
    </location>
</feature>
<feature type="sequence variant" description="In allele 15.">
    <original>V</original>
    <variation>G</variation>
    <location>
        <position position="110"/>
    </location>
</feature>
<feature type="sequence variant" description="In allele 7.">
    <original>V</original>
    <variation>I</variation>
    <location>
        <position position="110"/>
    </location>
</feature>
<feature type="sequence variant" description="In allele 15.">
    <original>QI</original>
    <variation>KK</variation>
    <location>
        <begin position="122"/>
        <end position="123"/>
    </location>
</feature>
<feature type="sequence variant" description="In allele 15.">
    <original>K</original>
    <variation>D</variation>
    <location>
        <position position="127"/>
    </location>
</feature>
<feature type="sequence variant" description="In allele 7, allele 8, allele 9, allele 10, allele 11 and allele 14.">
    <original>T</original>
    <variation>S</variation>
    <location>
        <position position="129"/>
    </location>
</feature>
<feature type="sequence variant" description="In allele 16.">
    <original>R</original>
    <variation>C</variation>
    <location>
        <position position="139"/>
    </location>
</feature>
<feature type="sequence variant" description="In allele 13.">
    <original>L</original>
    <variation>I</variation>
    <location>
        <position position="144"/>
    </location>
</feature>
<feature type="sequence variant" description="In allele 5, allele 10, allele 13 and allele 15.">
    <original>R</original>
    <variation>K</variation>
    <location>
        <position position="164"/>
    </location>
</feature>
<feature type="non-terminal residue">
    <location>
        <position position="1"/>
    </location>
</feature>
<feature type="non-terminal residue">
    <location>
        <position position="165"/>
    </location>
</feature>
<reference key="1">
    <citation type="journal article" date="1998" name="Proc. Natl. Acad. Sci. U.S.A.">
        <title>Multilocus sequence typing: a portable approach to the identification of clones within populations of pathogenic microorganisms.</title>
        <authorList>
            <person name="Maiden M.C.J."/>
            <person name="Bygraves J.A."/>
            <person name="Feil E."/>
            <person name="Morelli G."/>
            <person name="Russell J.E."/>
            <person name="Urwin R."/>
            <person name="Zhang Q."/>
            <person name="Zhou J."/>
            <person name="Zurth K."/>
            <person name="Caugant D.A."/>
            <person name="Feavers I.M."/>
            <person name="Achtman M."/>
            <person name="Spratt B.G."/>
        </authorList>
    </citation>
    <scope>NUCLEOTIDE SEQUENCE [GENOMIC DNA]</scope>
    <source>
        <strain>Allele 1 to allele 16</strain>
    </source>
</reference>
<proteinExistence type="inferred from homology"/>
<dbReference type="EC" id="2.4.99.28" evidence="1"/>
<dbReference type="EMBL" id="AF037814">
    <property type="protein sequence ID" value="AAC08817.1"/>
    <property type="molecule type" value="Genomic_DNA"/>
</dbReference>
<dbReference type="EMBL" id="AF037815">
    <property type="protein sequence ID" value="AAC08818.1"/>
    <property type="molecule type" value="Genomic_DNA"/>
</dbReference>
<dbReference type="EMBL" id="AF037816">
    <property type="protein sequence ID" value="AAC08819.1"/>
    <property type="molecule type" value="Genomic_DNA"/>
</dbReference>
<dbReference type="EMBL" id="AF037817">
    <property type="protein sequence ID" value="AAC08820.1"/>
    <property type="molecule type" value="Genomic_DNA"/>
</dbReference>
<dbReference type="EMBL" id="AF037818">
    <property type="protein sequence ID" value="AAC08821.1"/>
    <property type="molecule type" value="Genomic_DNA"/>
</dbReference>
<dbReference type="EMBL" id="AF037819">
    <property type="protein sequence ID" value="AAC08822.1"/>
    <property type="molecule type" value="Genomic_DNA"/>
</dbReference>
<dbReference type="EMBL" id="AF037820">
    <property type="protein sequence ID" value="AAC08823.1"/>
    <property type="molecule type" value="Genomic_DNA"/>
</dbReference>
<dbReference type="EMBL" id="AF037821">
    <property type="protein sequence ID" value="AAC08824.1"/>
    <property type="molecule type" value="Genomic_DNA"/>
</dbReference>
<dbReference type="EMBL" id="AF037822">
    <property type="protein sequence ID" value="AAC08825.1"/>
    <property type="molecule type" value="Genomic_DNA"/>
</dbReference>
<dbReference type="EMBL" id="AF037823">
    <property type="protein sequence ID" value="AAC08826.1"/>
    <property type="molecule type" value="Genomic_DNA"/>
</dbReference>
<dbReference type="EMBL" id="AF037824">
    <property type="protein sequence ID" value="AAC08827.1"/>
    <property type="molecule type" value="Genomic_DNA"/>
</dbReference>
<dbReference type="EMBL" id="AF037825">
    <property type="protein sequence ID" value="AAC08828.1"/>
    <property type="molecule type" value="Genomic_DNA"/>
</dbReference>
<dbReference type="EMBL" id="AF037826">
    <property type="protein sequence ID" value="AAC08829.1"/>
    <property type="molecule type" value="Genomic_DNA"/>
</dbReference>
<dbReference type="EMBL" id="AF037827">
    <property type="protein sequence ID" value="AAC08830.1"/>
    <property type="molecule type" value="Genomic_DNA"/>
</dbReference>
<dbReference type="EMBL" id="AF037828">
    <property type="protein sequence ID" value="AAC08831.1"/>
    <property type="molecule type" value="Genomic_DNA"/>
</dbReference>
<dbReference type="EMBL" id="AF037829">
    <property type="protein sequence ID" value="AAC08832.1"/>
    <property type="molecule type" value="Genomic_DNA"/>
</dbReference>
<dbReference type="SMR" id="P69345"/>
<dbReference type="CAZy" id="GT51">
    <property type="family name" value="Glycosyltransferase Family 51"/>
</dbReference>
<dbReference type="UniPathway" id="UPA00219"/>
<dbReference type="GO" id="GO:0009274">
    <property type="term" value="C:peptidoglycan-based cell wall"/>
    <property type="evidence" value="ECO:0007669"/>
    <property type="project" value="InterPro"/>
</dbReference>
<dbReference type="GO" id="GO:0005886">
    <property type="term" value="C:plasma membrane"/>
    <property type="evidence" value="ECO:0007669"/>
    <property type="project" value="UniProtKB-SubCell"/>
</dbReference>
<dbReference type="GO" id="GO:0016763">
    <property type="term" value="F:pentosyltransferase activity"/>
    <property type="evidence" value="ECO:0007669"/>
    <property type="project" value="InterPro"/>
</dbReference>
<dbReference type="GO" id="GO:0008955">
    <property type="term" value="F:peptidoglycan glycosyltransferase activity"/>
    <property type="evidence" value="ECO:0007669"/>
    <property type="project" value="RHEA"/>
</dbReference>
<dbReference type="GO" id="GO:0071555">
    <property type="term" value="P:cell wall organization"/>
    <property type="evidence" value="ECO:0007669"/>
    <property type="project" value="UniProtKB-KW"/>
</dbReference>
<dbReference type="GO" id="GO:0009252">
    <property type="term" value="P:peptidoglycan biosynthetic process"/>
    <property type="evidence" value="ECO:0007669"/>
    <property type="project" value="UniProtKB-UniPathway"/>
</dbReference>
<dbReference type="GO" id="GO:0008360">
    <property type="term" value="P:regulation of cell shape"/>
    <property type="evidence" value="ECO:0007669"/>
    <property type="project" value="UniProtKB-KW"/>
</dbReference>
<dbReference type="Gene3D" id="1.10.3810.10">
    <property type="entry name" value="Biosynthetic peptidoglycan transglycosylase-like"/>
    <property type="match status" value="1"/>
</dbReference>
<dbReference type="InterPro" id="IPR001264">
    <property type="entry name" value="Glyco_trans_51"/>
</dbReference>
<dbReference type="InterPro" id="IPR023346">
    <property type="entry name" value="Lysozyme-like_dom_sf"/>
</dbReference>
<dbReference type="InterPro" id="IPR036950">
    <property type="entry name" value="PBP_transglycosylase"/>
</dbReference>
<dbReference type="InterPro" id="IPR011812">
    <property type="entry name" value="Pep_trsgly"/>
</dbReference>
<dbReference type="NCBIfam" id="TIGR02070">
    <property type="entry name" value="mono_pep_trsgly"/>
    <property type="match status" value="1"/>
</dbReference>
<dbReference type="PANTHER" id="PTHR30400:SF0">
    <property type="entry name" value="BIOSYNTHETIC PEPTIDOGLYCAN TRANSGLYCOSYLASE"/>
    <property type="match status" value="1"/>
</dbReference>
<dbReference type="PANTHER" id="PTHR30400">
    <property type="entry name" value="MONOFUNCTIONAL BIOSYNTHETIC PEPTIDOGLYCAN TRANSGLYCOSYLASE"/>
    <property type="match status" value="1"/>
</dbReference>
<dbReference type="Pfam" id="PF00912">
    <property type="entry name" value="Transgly"/>
    <property type="match status" value="1"/>
</dbReference>
<dbReference type="SUPFAM" id="SSF53955">
    <property type="entry name" value="Lysozyme-like"/>
    <property type="match status" value="1"/>
</dbReference>
<comment type="function">
    <text evidence="1">Peptidoglycan polymerase that catalyzes glycan chain elongation from lipid-linked precursors.</text>
</comment>
<comment type="catalytic activity">
    <reaction evidence="1">
        <text>[GlcNAc-(1-&gt;4)-Mur2Ac(oyl-L-Ala-gamma-D-Glu-L-Lys-D-Ala-D-Ala)](n)-di-trans,octa-cis-undecaprenyl diphosphate + beta-D-GlcNAc-(1-&gt;4)-Mur2Ac(oyl-L-Ala-gamma-D-Glu-L-Lys-D-Ala-D-Ala)-di-trans,octa-cis-undecaprenyl diphosphate = [GlcNAc-(1-&gt;4)-Mur2Ac(oyl-L-Ala-gamma-D-Glu-L-Lys-D-Ala-D-Ala)](n+1)-di-trans,octa-cis-undecaprenyl diphosphate + di-trans,octa-cis-undecaprenyl diphosphate + H(+)</text>
        <dbReference type="Rhea" id="RHEA:23708"/>
        <dbReference type="Rhea" id="RHEA-COMP:9602"/>
        <dbReference type="Rhea" id="RHEA-COMP:9603"/>
        <dbReference type="ChEBI" id="CHEBI:15378"/>
        <dbReference type="ChEBI" id="CHEBI:58405"/>
        <dbReference type="ChEBI" id="CHEBI:60033"/>
        <dbReference type="ChEBI" id="CHEBI:78435"/>
        <dbReference type="EC" id="2.4.99.28"/>
    </reaction>
</comment>
<comment type="pathway">
    <text evidence="1">Cell wall biogenesis; peptidoglycan biosynthesis.</text>
</comment>
<comment type="subcellular location">
    <subcellularLocation>
        <location evidence="1">Cell inner membrane</location>
        <topology evidence="1">Single-pass membrane protein</topology>
    </subcellularLocation>
</comment>
<comment type="similarity">
    <text evidence="1">Belongs to the glycosyltransferase 51 family.</text>
</comment>